<comment type="function">
    <text evidence="1">Catalyzes the interconversion of 2-phosphoglycerate and 3-phosphoglycerate.</text>
</comment>
<comment type="catalytic activity">
    <reaction evidence="1">
        <text>(2R)-2-phosphoglycerate = (2R)-3-phosphoglycerate</text>
        <dbReference type="Rhea" id="RHEA:15901"/>
        <dbReference type="ChEBI" id="CHEBI:58272"/>
        <dbReference type="ChEBI" id="CHEBI:58289"/>
        <dbReference type="EC" id="5.4.2.11"/>
    </reaction>
</comment>
<comment type="pathway">
    <text evidence="1">Carbohydrate degradation; glycolysis; pyruvate from D-glyceraldehyde 3-phosphate: step 3/5.</text>
</comment>
<comment type="subunit">
    <text evidence="1">Homodimer.</text>
</comment>
<comment type="similarity">
    <text evidence="1">Belongs to the phosphoglycerate mutase family. BPG-dependent PGAM subfamily.</text>
</comment>
<feature type="chain" id="PRO_1000213388" description="2,3-bisphosphoglycerate-dependent phosphoglycerate mutase">
    <location>
        <begin position="1"/>
        <end position="250"/>
    </location>
</feature>
<feature type="active site" description="Tele-phosphohistidine intermediate" evidence="1">
    <location>
        <position position="11"/>
    </location>
</feature>
<feature type="active site" description="Proton donor/acceptor" evidence="1">
    <location>
        <position position="89"/>
    </location>
</feature>
<feature type="binding site" evidence="1">
    <location>
        <begin position="10"/>
        <end position="17"/>
    </location>
    <ligand>
        <name>substrate</name>
    </ligand>
</feature>
<feature type="binding site" evidence="1">
    <location>
        <begin position="23"/>
        <end position="24"/>
    </location>
    <ligand>
        <name>substrate</name>
    </ligand>
</feature>
<feature type="binding site" evidence="1">
    <location>
        <position position="62"/>
    </location>
    <ligand>
        <name>substrate</name>
    </ligand>
</feature>
<feature type="binding site" evidence="1">
    <location>
        <begin position="89"/>
        <end position="92"/>
    </location>
    <ligand>
        <name>substrate</name>
    </ligand>
</feature>
<feature type="binding site" evidence="1">
    <location>
        <position position="100"/>
    </location>
    <ligand>
        <name>substrate</name>
    </ligand>
</feature>
<feature type="binding site" evidence="1">
    <location>
        <begin position="116"/>
        <end position="117"/>
    </location>
    <ligand>
        <name>substrate</name>
    </ligand>
</feature>
<feature type="binding site" evidence="1">
    <location>
        <begin position="185"/>
        <end position="186"/>
    </location>
    <ligand>
        <name>substrate</name>
    </ligand>
</feature>
<feature type="site" description="Transition state stabilizer" evidence="1">
    <location>
        <position position="184"/>
    </location>
</feature>
<sequence>MAVTKLVLVRHGESQWNKENRFTGWYDVDLSEKGVSEAKAAGKLLKEEGYSFDFAYTSVLKRAIHTLWNVLDELDQAWLPVEKSWKLNERHYGALQGLNKAETAEKYGDEQVKQWRRGFAVTPPELTKDDERYPGHDPRYAKLSEKELPLTESLALTIDRVIPYWNETILPRMKSGERVIIAAHGNSLRALVKYLDNMSEEEILELNIPTGVPLVYEFDENFKPLKRYYLGNADEIAAKAAAVANQGKAK</sequence>
<proteinExistence type="inferred from homology"/>
<gene>
    <name evidence="1" type="primary">gpmA</name>
    <name type="ordered locus">BWG_0607</name>
</gene>
<protein>
    <recommendedName>
        <fullName evidence="1">2,3-bisphosphoglycerate-dependent phosphoglycerate mutase</fullName>
        <shortName evidence="1">BPG-dependent PGAM</shortName>
        <shortName evidence="1">PGAM</shortName>
        <shortName evidence="1">Phosphoglyceromutase</shortName>
        <shortName evidence="1">dPGM</shortName>
        <ecNumber evidence="1">5.4.2.11</ecNumber>
    </recommendedName>
</protein>
<organism>
    <name type="scientific">Escherichia coli (strain K12 / MC4100 / BW2952)</name>
    <dbReference type="NCBI Taxonomy" id="595496"/>
    <lineage>
        <taxon>Bacteria</taxon>
        <taxon>Pseudomonadati</taxon>
        <taxon>Pseudomonadota</taxon>
        <taxon>Gammaproteobacteria</taxon>
        <taxon>Enterobacterales</taxon>
        <taxon>Enterobacteriaceae</taxon>
        <taxon>Escherichia</taxon>
    </lineage>
</organism>
<accession>C4ZXS6</accession>
<evidence type="ECO:0000255" key="1">
    <source>
        <dbReference type="HAMAP-Rule" id="MF_01039"/>
    </source>
</evidence>
<reference key="1">
    <citation type="journal article" date="2009" name="J. Bacteriol.">
        <title>Genomic sequencing reveals regulatory mutations and recombinational events in the widely used MC4100 lineage of Escherichia coli K-12.</title>
        <authorList>
            <person name="Ferenci T."/>
            <person name="Zhou Z."/>
            <person name="Betteridge T."/>
            <person name="Ren Y."/>
            <person name="Liu Y."/>
            <person name="Feng L."/>
            <person name="Reeves P.R."/>
            <person name="Wang L."/>
        </authorList>
    </citation>
    <scope>NUCLEOTIDE SEQUENCE [LARGE SCALE GENOMIC DNA]</scope>
    <source>
        <strain>K12 / MC4100 / BW2952</strain>
    </source>
</reference>
<name>GPMA_ECOBW</name>
<keyword id="KW-0312">Gluconeogenesis</keyword>
<keyword id="KW-0324">Glycolysis</keyword>
<keyword id="KW-0413">Isomerase</keyword>
<dbReference type="EC" id="5.4.2.11" evidence="1"/>
<dbReference type="EMBL" id="CP001396">
    <property type="protein sequence ID" value="ACR64044.1"/>
    <property type="molecule type" value="Genomic_DNA"/>
</dbReference>
<dbReference type="RefSeq" id="WP_001295305.1">
    <property type="nucleotide sequence ID" value="NC_012759.1"/>
</dbReference>
<dbReference type="SMR" id="C4ZXS6"/>
<dbReference type="GeneID" id="93776726"/>
<dbReference type="KEGG" id="ebw:BWG_0607"/>
<dbReference type="HOGENOM" id="CLU_033323_1_1_6"/>
<dbReference type="UniPathway" id="UPA00109">
    <property type="reaction ID" value="UER00186"/>
</dbReference>
<dbReference type="GO" id="GO:0004619">
    <property type="term" value="F:phosphoglycerate mutase activity"/>
    <property type="evidence" value="ECO:0007669"/>
    <property type="project" value="UniProtKB-EC"/>
</dbReference>
<dbReference type="GO" id="GO:0006094">
    <property type="term" value="P:gluconeogenesis"/>
    <property type="evidence" value="ECO:0007669"/>
    <property type="project" value="UniProtKB-UniRule"/>
</dbReference>
<dbReference type="GO" id="GO:0006096">
    <property type="term" value="P:glycolytic process"/>
    <property type="evidence" value="ECO:0007669"/>
    <property type="project" value="UniProtKB-UniRule"/>
</dbReference>
<dbReference type="CDD" id="cd07067">
    <property type="entry name" value="HP_PGM_like"/>
    <property type="match status" value="1"/>
</dbReference>
<dbReference type="FunFam" id="3.40.50.1240:FF:000003">
    <property type="entry name" value="2,3-bisphosphoglycerate-dependent phosphoglycerate mutase"/>
    <property type="match status" value="1"/>
</dbReference>
<dbReference type="Gene3D" id="3.40.50.1240">
    <property type="entry name" value="Phosphoglycerate mutase-like"/>
    <property type="match status" value="1"/>
</dbReference>
<dbReference type="HAMAP" id="MF_01039">
    <property type="entry name" value="PGAM_GpmA"/>
    <property type="match status" value="1"/>
</dbReference>
<dbReference type="InterPro" id="IPR013078">
    <property type="entry name" value="His_Pase_superF_clade-1"/>
</dbReference>
<dbReference type="InterPro" id="IPR029033">
    <property type="entry name" value="His_PPase_superfam"/>
</dbReference>
<dbReference type="InterPro" id="IPR001345">
    <property type="entry name" value="PG/BPGM_mutase_AS"/>
</dbReference>
<dbReference type="InterPro" id="IPR005952">
    <property type="entry name" value="Phosphogly_mut1"/>
</dbReference>
<dbReference type="NCBIfam" id="TIGR01258">
    <property type="entry name" value="pgm_1"/>
    <property type="match status" value="1"/>
</dbReference>
<dbReference type="NCBIfam" id="NF010713">
    <property type="entry name" value="PRK14115.1"/>
    <property type="match status" value="1"/>
</dbReference>
<dbReference type="PANTHER" id="PTHR11931">
    <property type="entry name" value="PHOSPHOGLYCERATE MUTASE"/>
    <property type="match status" value="1"/>
</dbReference>
<dbReference type="Pfam" id="PF00300">
    <property type="entry name" value="His_Phos_1"/>
    <property type="match status" value="1"/>
</dbReference>
<dbReference type="PIRSF" id="PIRSF000709">
    <property type="entry name" value="6PFK_2-Ptase"/>
    <property type="match status" value="1"/>
</dbReference>
<dbReference type="SMART" id="SM00855">
    <property type="entry name" value="PGAM"/>
    <property type="match status" value="1"/>
</dbReference>
<dbReference type="SUPFAM" id="SSF53254">
    <property type="entry name" value="Phosphoglycerate mutase-like"/>
    <property type="match status" value="1"/>
</dbReference>
<dbReference type="PROSITE" id="PS00175">
    <property type="entry name" value="PG_MUTASE"/>
    <property type="match status" value="1"/>
</dbReference>